<reference key="1">
    <citation type="submission" date="2008-05" db="EMBL/GenBank/DDBJ databases">
        <title>Complete sequence of Shigella boydii serotype 18 strain BS512.</title>
        <authorList>
            <person name="Rasko D.A."/>
            <person name="Rosovitz M."/>
            <person name="Maurelli A.T."/>
            <person name="Myers G."/>
            <person name="Seshadri R."/>
            <person name="Cer R."/>
            <person name="Jiang L."/>
            <person name="Ravel J."/>
            <person name="Sebastian Y."/>
        </authorList>
    </citation>
    <scope>NUCLEOTIDE SEQUENCE [LARGE SCALE GENOMIC DNA]</scope>
    <source>
        <strain>CDC 3083-94 / BS512</strain>
    </source>
</reference>
<proteinExistence type="inferred from homology"/>
<evidence type="ECO:0000255" key="1">
    <source>
        <dbReference type="HAMAP-Rule" id="MF_01196"/>
    </source>
</evidence>
<evidence type="ECO:0000256" key="2">
    <source>
        <dbReference type="SAM" id="MobiDB-lite"/>
    </source>
</evidence>
<accession>B2TWC4</accession>
<name>ZAPB_SHIB3</name>
<organism>
    <name type="scientific">Shigella boydii serotype 18 (strain CDC 3083-94 / BS512)</name>
    <dbReference type="NCBI Taxonomy" id="344609"/>
    <lineage>
        <taxon>Bacteria</taxon>
        <taxon>Pseudomonadati</taxon>
        <taxon>Pseudomonadota</taxon>
        <taxon>Gammaproteobacteria</taxon>
        <taxon>Enterobacterales</taxon>
        <taxon>Enterobacteriaceae</taxon>
        <taxon>Shigella</taxon>
    </lineage>
</organism>
<protein>
    <recommendedName>
        <fullName evidence="1">Cell division protein ZapB</fullName>
    </recommendedName>
</protein>
<comment type="function">
    <text evidence="1">Non-essential, abundant cell division factor that is required for proper Z-ring formation. It is recruited early to the divisome by direct interaction with FtsZ, stimulating Z-ring assembly and thereby promoting cell division earlier in the cell cycle. Its recruitment to the Z-ring requires functional FtsA or ZipA.</text>
</comment>
<comment type="subunit">
    <text evidence="1">Homodimer. The ends of the coiled-coil dimer bind to each other, forming polymers. Interacts with FtsZ.</text>
</comment>
<comment type="subcellular location">
    <subcellularLocation>
        <location evidence="1">Cytoplasm</location>
    </subcellularLocation>
    <text evidence="1">Localizes to the septum at mid-cell, in a FtsZ-like pattern.</text>
</comment>
<comment type="similarity">
    <text evidence="1">Belongs to the ZapB family.</text>
</comment>
<dbReference type="EMBL" id="CP001063">
    <property type="protein sequence ID" value="ACD08372.1"/>
    <property type="molecule type" value="Genomic_DNA"/>
</dbReference>
<dbReference type="SMR" id="B2TWC4"/>
<dbReference type="STRING" id="344609.SbBS512_E4410"/>
<dbReference type="KEGG" id="sbc:SbBS512_E4410"/>
<dbReference type="HOGENOM" id="CLU_171174_2_0_6"/>
<dbReference type="Proteomes" id="UP000001030">
    <property type="component" value="Chromosome"/>
</dbReference>
<dbReference type="GO" id="GO:0005737">
    <property type="term" value="C:cytoplasm"/>
    <property type="evidence" value="ECO:0007669"/>
    <property type="project" value="UniProtKB-SubCell"/>
</dbReference>
<dbReference type="GO" id="GO:0000917">
    <property type="term" value="P:division septum assembly"/>
    <property type="evidence" value="ECO:0007669"/>
    <property type="project" value="UniProtKB-KW"/>
</dbReference>
<dbReference type="GO" id="GO:0043093">
    <property type="term" value="P:FtsZ-dependent cytokinesis"/>
    <property type="evidence" value="ECO:0007669"/>
    <property type="project" value="UniProtKB-UniRule"/>
</dbReference>
<dbReference type="FunFam" id="1.20.5.340:FF:000014">
    <property type="entry name" value="Cell division protein ZapB"/>
    <property type="match status" value="1"/>
</dbReference>
<dbReference type="Gene3D" id="1.20.5.340">
    <property type="match status" value="1"/>
</dbReference>
<dbReference type="HAMAP" id="MF_01196">
    <property type="entry name" value="ZapB"/>
    <property type="match status" value="1"/>
</dbReference>
<dbReference type="InterPro" id="IPR009252">
    <property type="entry name" value="Cell_div_ZapB"/>
</dbReference>
<dbReference type="NCBIfam" id="NF011951">
    <property type="entry name" value="PRK15422.1"/>
    <property type="match status" value="1"/>
</dbReference>
<dbReference type="Pfam" id="PF06005">
    <property type="entry name" value="ZapB"/>
    <property type="match status" value="1"/>
</dbReference>
<gene>
    <name evidence="1" type="primary">zapB</name>
    <name type="ordered locus">SbBS512_E4410</name>
</gene>
<keyword id="KW-0007">Acetylation</keyword>
<keyword id="KW-0131">Cell cycle</keyword>
<keyword id="KW-0132">Cell division</keyword>
<keyword id="KW-0175">Coiled coil</keyword>
<keyword id="KW-0963">Cytoplasm</keyword>
<keyword id="KW-1185">Reference proteome</keyword>
<keyword id="KW-0717">Septation</keyword>
<feature type="chain" id="PRO_1000138453" description="Cell division protein ZapB">
    <location>
        <begin position="1"/>
        <end position="79"/>
    </location>
</feature>
<feature type="region of interest" description="Disordered" evidence="2">
    <location>
        <begin position="34"/>
        <end position="65"/>
    </location>
</feature>
<feature type="coiled-coil region" evidence="1">
    <location>
        <begin position="3"/>
        <end position="79"/>
    </location>
</feature>
<feature type="compositionally biased region" description="Polar residues" evidence="2">
    <location>
        <begin position="35"/>
        <end position="45"/>
    </location>
</feature>
<feature type="compositionally biased region" description="Basic and acidic residues" evidence="2">
    <location>
        <begin position="46"/>
        <end position="60"/>
    </location>
</feature>
<feature type="modified residue" description="N6-acetyllysine" evidence="1">
    <location>
        <position position="8"/>
    </location>
</feature>
<sequence>MSLEVFEKLEAKVQQAIDTITLLQMEIEELKEKNNSLSQEVQNAQHQREELERENNHLKEQQNGWQERLQALLGRMEEV</sequence>